<gene>
    <name evidence="1" type="primary">rpsS</name>
    <name type="ordered locus">CV_4182</name>
</gene>
<reference key="1">
    <citation type="journal article" date="2003" name="Proc. Natl. Acad. Sci. U.S.A.">
        <title>The complete genome sequence of Chromobacterium violaceum reveals remarkable and exploitable bacterial adaptability.</title>
        <authorList>
            <person name="Vasconcelos A.T.R."/>
            <person name="de Almeida D.F."/>
            <person name="Hungria M."/>
            <person name="Guimaraes C.T."/>
            <person name="Antonio R.V."/>
            <person name="Almeida F.C."/>
            <person name="de Almeida L.G.P."/>
            <person name="de Almeida R."/>
            <person name="Alves-Gomes J.A."/>
            <person name="Andrade E.M."/>
            <person name="Araripe J."/>
            <person name="de Araujo M.F.F."/>
            <person name="Astolfi-Filho S."/>
            <person name="Azevedo V."/>
            <person name="Baptista A.J."/>
            <person name="Bataus L.A.M."/>
            <person name="Batista J.S."/>
            <person name="Belo A."/>
            <person name="van den Berg C."/>
            <person name="Bogo M."/>
            <person name="Bonatto S."/>
            <person name="Bordignon J."/>
            <person name="Brigido M.M."/>
            <person name="Brito C.A."/>
            <person name="Brocchi M."/>
            <person name="Burity H.A."/>
            <person name="Camargo A.A."/>
            <person name="Cardoso D.D.P."/>
            <person name="Carneiro N.P."/>
            <person name="Carraro D.M."/>
            <person name="Carvalho C.M.B."/>
            <person name="Cascardo J.C.M."/>
            <person name="Cavada B.S."/>
            <person name="Chueire L.M.O."/>
            <person name="Creczynski-Pasa T.B."/>
            <person name="Cunha-Junior N.C."/>
            <person name="Fagundes N."/>
            <person name="Falcao C.L."/>
            <person name="Fantinatti F."/>
            <person name="Farias I.P."/>
            <person name="Felipe M.S.S."/>
            <person name="Ferrari L.P."/>
            <person name="Ferro J.A."/>
            <person name="Ferro M.I.T."/>
            <person name="Franco G.R."/>
            <person name="Freitas N.S.A."/>
            <person name="Furlan L.R."/>
            <person name="Gazzinelli R.T."/>
            <person name="Gomes E.A."/>
            <person name="Goncalves P.R."/>
            <person name="Grangeiro T.B."/>
            <person name="Grattapaglia D."/>
            <person name="Grisard E.C."/>
            <person name="Hanna E.S."/>
            <person name="Jardim S.N."/>
            <person name="Laurino J."/>
            <person name="Leoi L.C.T."/>
            <person name="Lima L.F.A."/>
            <person name="Loureiro M.F."/>
            <person name="Lyra M.C.C.P."/>
            <person name="Madeira H.M.F."/>
            <person name="Manfio G.P."/>
            <person name="Maranhao A.Q."/>
            <person name="Martins W.S."/>
            <person name="di Mauro S.M.Z."/>
            <person name="de Medeiros S.R.B."/>
            <person name="Meissner R.V."/>
            <person name="Moreira M.A.M."/>
            <person name="Nascimento F.F."/>
            <person name="Nicolas M.F."/>
            <person name="Oliveira J.G."/>
            <person name="Oliveira S.C."/>
            <person name="Paixao R.F.C."/>
            <person name="Parente J.A."/>
            <person name="Pedrosa F.O."/>
            <person name="Pena S.D.J."/>
            <person name="Pereira J.O."/>
            <person name="Pereira M."/>
            <person name="Pinto L.S.R.C."/>
            <person name="Pinto L.S."/>
            <person name="Porto J.I.R."/>
            <person name="Potrich D.P."/>
            <person name="Ramalho-Neto C.E."/>
            <person name="Reis A.M.M."/>
            <person name="Rigo L.U."/>
            <person name="Rondinelli E."/>
            <person name="Santos E.B.P."/>
            <person name="Santos F.R."/>
            <person name="Schneider M.P.C."/>
            <person name="Seuanez H.N."/>
            <person name="Silva A.M.R."/>
            <person name="da Silva A.L.C."/>
            <person name="Silva D.W."/>
            <person name="Silva R."/>
            <person name="Simoes I.C."/>
            <person name="Simon D."/>
            <person name="Soares C.M.A."/>
            <person name="Soares R.B.A."/>
            <person name="Souza E.M."/>
            <person name="Souza K.R.L."/>
            <person name="Souza R.C."/>
            <person name="Steffens M.B.R."/>
            <person name="Steindel M."/>
            <person name="Teixeira S.R."/>
            <person name="Urmenyi T."/>
            <person name="Vettore A."/>
            <person name="Wassem R."/>
            <person name="Zaha A."/>
            <person name="Simpson A.J.G."/>
        </authorList>
    </citation>
    <scope>NUCLEOTIDE SEQUENCE [LARGE SCALE GENOMIC DNA]</scope>
    <source>
        <strain>ATCC 12472 / DSM 30191 / JCM 1249 / CCUG 213 / NBRC 12614 / NCIMB 9131 / NCTC 9757 / MK</strain>
    </source>
</reference>
<evidence type="ECO:0000255" key="1">
    <source>
        <dbReference type="HAMAP-Rule" id="MF_00531"/>
    </source>
</evidence>
<evidence type="ECO:0000305" key="2"/>
<comment type="function">
    <text evidence="1">Protein S19 forms a complex with S13 that binds strongly to the 16S ribosomal RNA.</text>
</comment>
<comment type="similarity">
    <text evidence="1">Belongs to the universal ribosomal protein uS19 family.</text>
</comment>
<organism>
    <name type="scientific">Chromobacterium violaceum (strain ATCC 12472 / DSM 30191 / JCM 1249 / CCUG 213 / NBRC 12614 / NCIMB 9131 / NCTC 9757 / MK)</name>
    <dbReference type="NCBI Taxonomy" id="243365"/>
    <lineage>
        <taxon>Bacteria</taxon>
        <taxon>Pseudomonadati</taxon>
        <taxon>Pseudomonadota</taxon>
        <taxon>Betaproteobacteria</taxon>
        <taxon>Neisseriales</taxon>
        <taxon>Chromobacteriaceae</taxon>
        <taxon>Chromobacterium</taxon>
    </lineage>
</organism>
<sequence length="92" mass="10350">MARSQKKGPFVDLHLLKKVDAVRATSDKRPIKTWSRRSTILPDFIGLTIAVHNGRTHVPVYVSENMVGHKLGEFSLTRTFKGHAADKKAKKK</sequence>
<accession>Q7NQF6</accession>
<keyword id="KW-1185">Reference proteome</keyword>
<keyword id="KW-0687">Ribonucleoprotein</keyword>
<keyword id="KW-0689">Ribosomal protein</keyword>
<keyword id="KW-0694">RNA-binding</keyword>
<keyword id="KW-0699">rRNA-binding</keyword>
<feature type="chain" id="PRO_0000129807" description="Small ribosomal subunit protein uS19">
    <location>
        <begin position="1"/>
        <end position="92"/>
    </location>
</feature>
<protein>
    <recommendedName>
        <fullName evidence="1">Small ribosomal subunit protein uS19</fullName>
    </recommendedName>
    <alternativeName>
        <fullName evidence="2">30S ribosomal protein S19</fullName>
    </alternativeName>
</protein>
<proteinExistence type="inferred from homology"/>
<name>RS19_CHRVO</name>
<dbReference type="EMBL" id="AE016825">
    <property type="protein sequence ID" value="AAQ61842.2"/>
    <property type="molecule type" value="Genomic_DNA"/>
</dbReference>
<dbReference type="RefSeq" id="WP_011137729.1">
    <property type="nucleotide sequence ID" value="NC_005085.1"/>
</dbReference>
<dbReference type="SMR" id="Q7NQF6"/>
<dbReference type="STRING" id="243365.CV_4182"/>
<dbReference type="GeneID" id="97477819"/>
<dbReference type="KEGG" id="cvi:CV_4182"/>
<dbReference type="eggNOG" id="COG0185">
    <property type="taxonomic scope" value="Bacteria"/>
</dbReference>
<dbReference type="HOGENOM" id="CLU_144911_0_1_4"/>
<dbReference type="OrthoDB" id="9797833at2"/>
<dbReference type="Proteomes" id="UP000001424">
    <property type="component" value="Chromosome"/>
</dbReference>
<dbReference type="GO" id="GO:0005737">
    <property type="term" value="C:cytoplasm"/>
    <property type="evidence" value="ECO:0007669"/>
    <property type="project" value="UniProtKB-ARBA"/>
</dbReference>
<dbReference type="GO" id="GO:0015935">
    <property type="term" value="C:small ribosomal subunit"/>
    <property type="evidence" value="ECO:0007669"/>
    <property type="project" value="InterPro"/>
</dbReference>
<dbReference type="GO" id="GO:0019843">
    <property type="term" value="F:rRNA binding"/>
    <property type="evidence" value="ECO:0007669"/>
    <property type="project" value="UniProtKB-UniRule"/>
</dbReference>
<dbReference type="GO" id="GO:0003735">
    <property type="term" value="F:structural constituent of ribosome"/>
    <property type="evidence" value="ECO:0007669"/>
    <property type="project" value="InterPro"/>
</dbReference>
<dbReference type="GO" id="GO:0000028">
    <property type="term" value="P:ribosomal small subunit assembly"/>
    <property type="evidence" value="ECO:0007669"/>
    <property type="project" value="TreeGrafter"/>
</dbReference>
<dbReference type="GO" id="GO:0006412">
    <property type="term" value="P:translation"/>
    <property type="evidence" value="ECO:0007669"/>
    <property type="project" value="UniProtKB-UniRule"/>
</dbReference>
<dbReference type="FunFam" id="3.30.860.10:FF:000001">
    <property type="entry name" value="30S ribosomal protein S19"/>
    <property type="match status" value="1"/>
</dbReference>
<dbReference type="Gene3D" id="3.30.860.10">
    <property type="entry name" value="30s Ribosomal Protein S19, Chain A"/>
    <property type="match status" value="1"/>
</dbReference>
<dbReference type="HAMAP" id="MF_00531">
    <property type="entry name" value="Ribosomal_uS19"/>
    <property type="match status" value="1"/>
</dbReference>
<dbReference type="InterPro" id="IPR002222">
    <property type="entry name" value="Ribosomal_uS19"/>
</dbReference>
<dbReference type="InterPro" id="IPR005732">
    <property type="entry name" value="Ribosomal_uS19_bac-type"/>
</dbReference>
<dbReference type="InterPro" id="IPR020934">
    <property type="entry name" value="Ribosomal_uS19_CS"/>
</dbReference>
<dbReference type="InterPro" id="IPR023575">
    <property type="entry name" value="Ribosomal_uS19_SF"/>
</dbReference>
<dbReference type="NCBIfam" id="TIGR01050">
    <property type="entry name" value="rpsS_bact"/>
    <property type="match status" value="1"/>
</dbReference>
<dbReference type="PANTHER" id="PTHR11880">
    <property type="entry name" value="RIBOSOMAL PROTEIN S19P FAMILY MEMBER"/>
    <property type="match status" value="1"/>
</dbReference>
<dbReference type="PANTHER" id="PTHR11880:SF8">
    <property type="entry name" value="SMALL RIBOSOMAL SUBUNIT PROTEIN US19M"/>
    <property type="match status" value="1"/>
</dbReference>
<dbReference type="Pfam" id="PF00203">
    <property type="entry name" value="Ribosomal_S19"/>
    <property type="match status" value="1"/>
</dbReference>
<dbReference type="PIRSF" id="PIRSF002144">
    <property type="entry name" value="Ribosomal_S19"/>
    <property type="match status" value="1"/>
</dbReference>
<dbReference type="PRINTS" id="PR00975">
    <property type="entry name" value="RIBOSOMALS19"/>
</dbReference>
<dbReference type="SUPFAM" id="SSF54570">
    <property type="entry name" value="Ribosomal protein S19"/>
    <property type="match status" value="1"/>
</dbReference>
<dbReference type="PROSITE" id="PS00323">
    <property type="entry name" value="RIBOSOMAL_S19"/>
    <property type="match status" value="1"/>
</dbReference>